<proteinExistence type="predicted"/>
<evidence type="ECO:0000255" key="1">
    <source>
        <dbReference type="PROSITE-ProRule" id="PRU00108"/>
    </source>
</evidence>
<sequence>MTNGRKMEYKLVDSEKDIERSYEPRRKPKRSRIQLHDWQSMLLEHSFRMNPYPDRIEKYNLFLKTKIPMKNVKIWFQNRRAREKSFYEEAVEVHRDGRRAGHRSLGSRSALFAEEFQYRRY</sequence>
<protein>
    <recommendedName>
        <fullName>Homeobox protein HD-6</fullName>
    </recommendedName>
    <alternativeName>
        <fullName>EcHD-6</fullName>
    </alternativeName>
</protein>
<dbReference type="EMBL" id="AL590444">
    <property type="protein sequence ID" value="CAD25284.1"/>
    <property type="molecule type" value="Genomic_DNA"/>
</dbReference>
<dbReference type="EMBL" id="BK001344">
    <property type="protein sequence ID" value="DAA01307.1"/>
    <property type="molecule type" value="Genomic_DNA"/>
</dbReference>
<dbReference type="RefSeq" id="NP_584780.1">
    <property type="nucleotide sequence ID" value="NM_001041130.1"/>
</dbReference>
<dbReference type="SMR" id="Q8SVT6"/>
<dbReference type="GeneID" id="858928"/>
<dbReference type="KEGG" id="ecu:ECU04_0970"/>
<dbReference type="VEuPathDB" id="MicrosporidiaDB:ECU04_0970"/>
<dbReference type="HOGENOM" id="CLU_166290_0_0_1"/>
<dbReference type="InParanoid" id="Q8SVT6"/>
<dbReference type="OMA" id="NGRKMEY"/>
<dbReference type="OrthoDB" id="6159439at2759"/>
<dbReference type="Proteomes" id="UP000000819">
    <property type="component" value="Chromosome IV"/>
</dbReference>
<dbReference type="GO" id="GO:0005634">
    <property type="term" value="C:nucleus"/>
    <property type="evidence" value="ECO:0007669"/>
    <property type="project" value="UniProtKB-SubCell"/>
</dbReference>
<dbReference type="GO" id="GO:0003677">
    <property type="term" value="F:DNA binding"/>
    <property type="evidence" value="ECO:0007669"/>
    <property type="project" value="UniProtKB-KW"/>
</dbReference>
<dbReference type="CDD" id="cd00086">
    <property type="entry name" value="homeodomain"/>
    <property type="match status" value="1"/>
</dbReference>
<dbReference type="Gene3D" id="1.10.10.60">
    <property type="entry name" value="Homeodomain-like"/>
    <property type="match status" value="1"/>
</dbReference>
<dbReference type="InterPro" id="IPR001356">
    <property type="entry name" value="HD"/>
</dbReference>
<dbReference type="InterPro" id="IPR009057">
    <property type="entry name" value="Homeodomain-like_sf"/>
</dbReference>
<dbReference type="Pfam" id="PF00046">
    <property type="entry name" value="Homeodomain"/>
    <property type="match status" value="1"/>
</dbReference>
<dbReference type="SMART" id="SM00389">
    <property type="entry name" value="HOX"/>
    <property type="match status" value="1"/>
</dbReference>
<dbReference type="SUPFAM" id="SSF46689">
    <property type="entry name" value="Homeodomain-like"/>
    <property type="match status" value="1"/>
</dbReference>
<dbReference type="PROSITE" id="PS50071">
    <property type="entry name" value="HOMEOBOX_2"/>
    <property type="match status" value="1"/>
</dbReference>
<name>HD6_ENCCU</name>
<comment type="subcellular location">
    <subcellularLocation>
        <location>Nucleus</location>
    </subcellularLocation>
</comment>
<gene>
    <name type="primary">HD-6</name>
    <name type="ordered locus">ECU04_0970</name>
</gene>
<organism>
    <name type="scientific">Encephalitozoon cuniculi (strain GB-M1)</name>
    <name type="common">Microsporidian parasite</name>
    <dbReference type="NCBI Taxonomy" id="284813"/>
    <lineage>
        <taxon>Eukaryota</taxon>
        <taxon>Fungi</taxon>
        <taxon>Fungi incertae sedis</taxon>
        <taxon>Microsporidia</taxon>
        <taxon>Unikaryonidae</taxon>
        <taxon>Encephalitozoon</taxon>
    </lineage>
</organism>
<feature type="chain" id="PRO_0000048915" description="Homeobox protein HD-6">
    <location>
        <begin position="1"/>
        <end position="121"/>
    </location>
</feature>
<feature type="DNA-binding region" description="Homeobox" evidence="1">
    <location>
        <begin position="28"/>
        <end position="87"/>
    </location>
</feature>
<accession>Q8SVT6</accession>
<accession>Q7SI85</accession>
<keyword id="KW-0238">DNA-binding</keyword>
<keyword id="KW-0371">Homeobox</keyword>
<keyword id="KW-0539">Nucleus</keyword>
<keyword id="KW-1185">Reference proteome</keyword>
<reference key="1">
    <citation type="journal article" date="2001" name="Nature">
        <title>Genome sequence and gene compaction of the eukaryote parasite Encephalitozoon cuniculi.</title>
        <authorList>
            <person name="Katinka M.D."/>
            <person name="Duprat S."/>
            <person name="Cornillot E."/>
            <person name="Metenier G."/>
            <person name="Thomarat F."/>
            <person name="Prensier G."/>
            <person name="Barbe V."/>
            <person name="Peyretaillade E."/>
            <person name="Brottier P."/>
            <person name="Wincker P."/>
            <person name="Delbac F."/>
            <person name="El Alaoui H."/>
            <person name="Peyret P."/>
            <person name="Saurin W."/>
            <person name="Gouy M."/>
            <person name="Weissenbach J."/>
            <person name="Vivares C.P."/>
        </authorList>
    </citation>
    <scope>NUCLEOTIDE SEQUENCE [LARGE SCALE GENOMIC DNA]</scope>
    <source>
        <strain>GB-M1</strain>
    </source>
</reference>
<reference key="2">
    <citation type="journal article" date="2003" name="Dev. Genes Evol.">
        <title>The homeobox genes of Encephalitozoon cuniculi (Microsporidia) reveal a putative mating-type locus.</title>
        <authorList>
            <person name="Buerglin T.R."/>
        </authorList>
    </citation>
    <scope>DISCUSSION OF SEQUENCE</scope>
</reference>